<accession>C4LGF9</accession>
<proteinExistence type="inferred from homology"/>
<protein>
    <recommendedName>
        <fullName evidence="1">Large ribosomal subunit protein bL9</fullName>
    </recommendedName>
    <alternativeName>
        <fullName evidence="2">50S ribosomal protein L9</fullName>
    </alternativeName>
</protein>
<keyword id="KW-1185">Reference proteome</keyword>
<keyword id="KW-0687">Ribonucleoprotein</keyword>
<keyword id="KW-0689">Ribosomal protein</keyword>
<keyword id="KW-0694">RNA-binding</keyword>
<keyword id="KW-0699">rRNA-binding</keyword>
<dbReference type="EMBL" id="CP001620">
    <property type="protein sequence ID" value="ACR18778.1"/>
    <property type="molecule type" value="Genomic_DNA"/>
</dbReference>
<dbReference type="RefSeq" id="WP_012732665.1">
    <property type="nucleotide sequence ID" value="NC_012704.1"/>
</dbReference>
<dbReference type="SMR" id="C4LGF9"/>
<dbReference type="STRING" id="645127.ckrop_2080"/>
<dbReference type="GeneID" id="92726871"/>
<dbReference type="KEGG" id="ckp:ckrop_2080"/>
<dbReference type="eggNOG" id="COG0359">
    <property type="taxonomic scope" value="Bacteria"/>
</dbReference>
<dbReference type="HOGENOM" id="CLU_078938_5_1_11"/>
<dbReference type="OrthoDB" id="9788336at2"/>
<dbReference type="Proteomes" id="UP000001473">
    <property type="component" value="Chromosome"/>
</dbReference>
<dbReference type="GO" id="GO:1990904">
    <property type="term" value="C:ribonucleoprotein complex"/>
    <property type="evidence" value="ECO:0007669"/>
    <property type="project" value="UniProtKB-KW"/>
</dbReference>
<dbReference type="GO" id="GO:0005840">
    <property type="term" value="C:ribosome"/>
    <property type="evidence" value="ECO:0007669"/>
    <property type="project" value="UniProtKB-KW"/>
</dbReference>
<dbReference type="GO" id="GO:0019843">
    <property type="term" value="F:rRNA binding"/>
    <property type="evidence" value="ECO:0007669"/>
    <property type="project" value="UniProtKB-UniRule"/>
</dbReference>
<dbReference type="GO" id="GO:0003735">
    <property type="term" value="F:structural constituent of ribosome"/>
    <property type="evidence" value="ECO:0007669"/>
    <property type="project" value="InterPro"/>
</dbReference>
<dbReference type="GO" id="GO:0006412">
    <property type="term" value="P:translation"/>
    <property type="evidence" value="ECO:0007669"/>
    <property type="project" value="UniProtKB-UniRule"/>
</dbReference>
<dbReference type="FunFam" id="3.40.5.10:FF:000003">
    <property type="entry name" value="50S ribosomal protein L9"/>
    <property type="match status" value="1"/>
</dbReference>
<dbReference type="Gene3D" id="3.10.430.100">
    <property type="entry name" value="Ribosomal protein L9, C-terminal domain"/>
    <property type="match status" value="1"/>
</dbReference>
<dbReference type="Gene3D" id="3.40.5.10">
    <property type="entry name" value="Ribosomal protein L9, N-terminal domain"/>
    <property type="match status" value="1"/>
</dbReference>
<dbReference type="HAMAP" id="MF_00503">
    <property type="entry name" value="Ribosomal_bL9"/>
    <property type="match status" value="1"/>
</dbReference>
<dbReference type="InterPro" id="IPR000244">
    <property type="entry name" value="Ribosomal_bL9"/>
</dbReference>
<dbReference type="InterPro" id="IPR009027">
    <property type="entry name" value="Ribosomal_bL9/RNase_H1_N"/>
</dbReference>
<dbReference type="InterPro" id="IPR020594">
    <property type="entry name" value="Ribosomal_bL9_bac/chp"/>
</dbReference>
<dbReference type="InterPro" id="IPR020069">
    <property type="entry name" value="Ribosomal_bL9_C"/>
</dbReference>
<dbReference type="InterPro" id="IPR036791">
    <property type="entry name" value="Ribosomal_bL9_C_sf"/>
</dbReference>
<dbReference type="InterPro" id="IPR020070">
    <property type="entry name" value="Ribosomal_bL9_N"/>
</dbReference>
<dbReference type="InterPro" id="IPR036935">
    <property type="entry name" value="Ribosomal_bL9_N_sf"/>
</dbReference>
<dbReference type="NCBIfam" id="TIGR00158">
    <property type="entry name" value="L9"/>
    <property type="match status" value="1"/>
</dbReference>
<dbReference type="PANTHER" id="PTHR21368">
    <property type="entry name" value="50S RIBOSOMAL PROTEIN L9"/>
    <property type="match status" value="1"/>
</dbReference>
<dbReference type="Pfam" id="PF03948">
    <property type="entry name" value="Ribosomal_L9_C"/>
    <property type="match status" value="1"/>
</dbReference>
<dbReference type="Pfam" id="PF01281">
    <property type="entry name" value="Ribosomal_L9_N"/>
    <property type="match status" value="1"/>
</dbReference>
<dbReference type="SUPFAM" id="SSF55658">
    <property type="entry name" value="L9 N-domain-like"/>
    <property type="match status" value="1"/>
</dbReference>
<dbReference type="SUPFAM" id="SSF55653">
    <property type="entry name" value="Ribosomal protein L9 C-domain"/>
    <property type="match status" value="1"/>
</dbReference>
<dbReference type="PROSITE" id="PS00651">
    <property type="entry name" value="RIBOSOMAL_L9"/>
    <property type="match status" value="1"/>
</dbReference>
<gene>
    <name evidence="1" type="primary">rplI</name>
    <name type="ordered locus">ckrop_2080</name>
</gene>
<comment type="function">
    <text evidence="1">Binds to the 23S rRNA.</text>
</comment>
<comment type="similarity">
    <text evidence="1">Belongs to the bacterial ribosomal protein bL9 family.</text>
</comment>
<organism>
    <name type="scientific">Corynebacterium kroppenstedtii (strain DSM 44385 / JCM 11950 / CIP 105744 / CCUG 35717)</name>
    <dbReference type="NCBI Taxonomy" id="645127"/>
    <lineage>
        <taxon>Bacteria</taxon>
        <taxon>Bacillati</taxon>
        <taxon>Actinomycetota</taxon>
        <taxon>Actinomycetes</taxon>
        <taxon>Mycobacteriales</taxon>
        <taxon>Corynebacteriaceae</taxon>
        <taxon>Corynebacterium</taxon>
    </lineage>
</organism>
<name>RL9_CORK4</name>
<evidence type="ECO:0000255" key="1">
    <source>
        <dbReference type="HAMAP-Rule" id="MF_00503"/>
    </source>
</evidence>
<evidence type="ECO:0000305" key="2"/>
<feature type="chain" id="PRO_1000206540" description="Large ribosomal subunit protein bL9">
    <location>
        <begin position="1"/>
        <end position="150"/>
    </location>
</feature>
<reference key="1">
    <citation type="journal article" date="2008" name="J. Biotechnol.">
        <title>Ultrafast pyrosequencing of Corynebacterium kroppenstedtii DSM44385 revealed insights into the physiology of a lipophilic corynebacterium that lacks mycolic acids.</title>
        <authorList>
            <person name="Tauch A."/>
            <person name="Schneider J."/>
            <person name="Szczepanowski R."/>
            <person name="Tilker A."/>
            <person name="Viehoever P."/>
            <person name="Gartemann K.-H."/>
            <person name="Arnold W."/>
            <person name="Blom J."/>
            <person name="Brinkrolf K."/>
            <person name="Brune I."/>
            <person name="Goetker S."/>
            <person name="Weisshaar B."/>
            <person name="Goesmann A."/>
            <person name="Droege M."/>
            <person name="Puehler A."/>
        </authorList>
    </citation>
    <scope>NUCLEOTIDE SEQUENCE [LARGE SCALE GENOMIC DNA]</scope>
    <source>
        <strain>DSM 44385 / JCM 11950 / CIP 105744 / CCUG 35717</strain>
    </source>
</reference>
<sequence>MKLILTAAIDNLGVPGDIVEVKAGYGRNYLLPRGYAVPATRGAEKQVQDLKRAQEARAIRDADRAREVKEQLANLEGVSVAVRTANNGKLFGSVKPNDVAQAVVAAGGPELDKHSIDMTKGFVKSTGKYSVDVKLHEDIHGTINFEVVSQ</sequence>